<sequence>MTSIIKLTTLVGAQEESAVCYLLQVDEFRFLLDCGWDENFSMDIIDSVKKYVHQVDAVLLSHPDPLHLGALPYAVGKLGLNCAIYATIPVYKMGQMFMYDLYQSRHNTEDFSLFSLDDVDCAFDKIQQLKYNQIVHLKGKGHGLSITPLPAGHMIGGTIWKIVKDGEEEIVYAVDFNHKREIHLNGCSLEMINRPSLLITDSFNATYVQPRRKQRDEQLLTNVLETLRGDGNVLIAVDTAGRVLELAQLLDQIWRTKDAGLGVYSLALLNNVSYNVVEFSKSQVEWMSDKLMRCFEDKRNNPFQFRHLTLCHGYSDLARVPSPKVVLASQPDLECGFSRELFIQWCQDPKNSVILTYRTTPGTLARFLIDHPSERIIDIELRKRVKLEGKELEEYVEKEKLKKEAAKKLEQSKEADLDSSDDSDVEEDIDQITSHKAKHDLMMKNEGSRKGSFFKQAKKSYPMFPAPEDRIKWDEYGEIIKPEDFLVPELQVTEDEKTKLESGLTNGDEPMDQDLSDVPTKCVSTTESMEIKARVTYIDYEGRSDGDSIKKIINQMKPRQLIIVHGPPDATQDLAEACRAFGGKDIKVYTPKLHETVDATSETHIYQVRLKDSLVSSLKFCKAKDTELAWIDGVLDMRVSKVDTGVILEERELKDEGEDMEMQVDTQVMDASTIAQQKVIKSLFGDDDKEFSEESEIIPTLEPLPSNEVPGHQSVFMNEPRLSDFKQVLLREGIHAEFVGGVLVCNNMVAVRRTETGRIGLEGCLCEDFFKIRELLYEQYAIV</sequence>
<name>CPSF2_XENLA</name>
<proteinExistence type="evidence at protein level"/>
<comment type="function">
    <text>CPSF plays a key role in pre-mRNA 3'-end formation, recognizing the AAUAAA signal sequence and interacting with poly(A) polymerase and other factors to bring about cleavage and poly(A) addition. In X.laevis this subunit seems to be predominantly involved in cytoplasmic polyadenylation reaction. May also be involved in the histone 3'-end pre-mRNA processing.</text>
</comment>
<comment type="subunit">
    <text evidence="1 3 4">CPSF is a heterotetramer composed of four distinct subunits 160, 100, 70 and 30 kDa (By similarity). Identification in a complex with cpsf2, cpsf73, cpsf160 and sympk. Interacts with sympk.</text>
</comment>
<comment type="subcellular location">
    <subcellularLocation>
        <location evidence="1">Nucleus</location>
    </subcellularLocation>
    <subcellularLocation>
        <location evidence="3">Cytoplasm</location>
    </subcellularLocation>
</comment>
<comment type="similarity">
    <text evidence="5">Belongs to the metallo-beta-lactamase superfamily. RNA-metabolizing metallo-beta-lactamase-like family. CPSF2/YSH1 subfamily.</text>
</comment>
<feature type="chain" id="PRO_0000074395" description="Cleavage and polyadenylation specificity factor subunit 2">
    <location>
        <begin position="1"/>
        <end position="783"/>
    </location>
</feature>
<feature type="region of interest" description="Disordered" evidence="2">
    <location>
        <begin position="407"/>
        <end position="427"/>
    </location>
</feature>
<feature type="compositionally biased region" description="Basic and acidic residues" evidence="2">
    <location>
        <begin position="407"/>
        <end position="416"/>
    </location>
</feature>
<feature type="compositionally biased region" description="Acidic residues" evidence="2">
    <location>
        <begin position="417"/>
        <end position="427"/>
    </location>
</feature>
<evidence type="ECO:0000250" key="1"/>
<evidence type="ECO:0000256" key="2">
    <source>
        <dbReference type="SAM" id="MobiDB-lite"/>
    </source>
</evidence>
<evidence type="ECO:0000269" key="3">
    <source>
    </source>
</evidence>
<evidence type="ECO:0000269" key="4">
    <source>
    </source>
</evidence>
<evidence type="ECO:0000305" key="5"/>
<dbReference type="EMBL" id="AF139986">
    <property type="protein sequence ID" value="AAD33061.1"/>
    <property type="molecule type" value="mRNA"/>
</dbReference>
<dbReference type="RefSeq" id="NP_001081123.1">
    <property type="nucleotide sequence ID" value="NM_001087654.1"/>
</dbReference>
<dbReference type="SMR" id="Q9W799"/>
<dbReference type="BioGRID" id="98996">
    <property type="interactions" value="1"/>
</dbReference>
<dbReference type="IntAct" id="Q9W799">
    <property type="interactions" value="1"/>
</dbReference>
<dbReference type="GeneID" id="394394"/>
<dbReference type="KEGG" id="xla:394394"/>
<dbReference type="AGR" id="Xenbase:XB-GENE-950598"/>
<dbReference type="CTD" id="394394"/>
<dbReference type="Xenbase" id="XB-GENE-950598">
    <property type="gene designation" value="cpsf2.S"/>
</dbReference>
<dbReference type="OrthoDB" id="64353at2759"/>
<dbReference type="Proteomes" id="UP000186698">
    <property type="component" value="Chromosome 8S"/>
</dbReference>
<dbReference type="Bgee" id="394394">
    <property type="expression patterns" value="Expressed in gastrula and 19 other cell types or tissues"/>
</dbReference>
<dbReference type="GO" id="GO:0005737">
    <property type="term" value="C:cytoplasm"/>
    <property type="evidence" value="ECO:0007669"/>
    <property type="project" value="UniProtKB-SubCell"/>
</dbReference>
<dbReference type="GO" id="GO:0005847">
    <property type="term" value="C:mRNA cleavage and polyadenylation specificity factor complex"/>
    <property type="evidence" value="ECO:0000250"/>
    <property type="project" value="UniProtKB"/>
</dbReference>
<dbReference type="GO" id="GO:0003723">
    <property type="term" value="F:RNA binding"/>
    <property type="evidence" value="ECO:0000318"/>
    <property type="project" value="GO_Central"/>
</dbReference>
<dbReference type="GO" id="GO:0006398">
    <property type="term" value="P:mRNA 3'-end processing by stem-loop binding and cleavage"/>
    <property type="evidence" value="ECO:0000318"/>
    <property type="project" value="GO_Central"/>
</dbReference>
<dbReference type="CDD" id="cd16293">
    <property type="entry name" value="CPSF2-like_MBL-fold"/>
    <property type="match status" value="1"/>
</dbReference>
<dbReference type="FunFam" id="3.60.15.10:FF:000008">
    <property type="entry name" value="Cleavage and polyadenylation specificity factor subunit 2"/>
    <property type="match status" value="1"/>
</dbReference>
<dbReference type="Gene3D" id="3.60.15.10">
    <property type="entry name" value="Ribonuclease Z/Hydroxyacylglutathione hydrolase-like"/>
    <property type="match status" value="1"/>
</dbReference>
<dbReference type="InterPro" id="IPR022712">
    <property type="entry name" value="Beta_Casp"/>
</dbReference>
<dbReference type="InterPro" id="IPR027075">
    <property type="entry name" value="CPSF2"/>
</dbReference>
<dbReference type="InterPro" id="IPR025069">
    <property type="entry name" value="Cpsf2_C"/>
</dbReference>
<dbReference type="InterPro" id="IPR035639">
    <property type="entry name" value="CPSF2_MBL"/>
</dbReference>
<dbReference type="InterPro" id="IPR001279">
    <property type="entry name" value="Metallo-B-lactamas"/>
</dbReference>
<dbReference type="InterPro" id="IPR036866">
    <property type="entry name" value="RibonucZ/Hydroxyglut_hydro"/>
</dbReference>
<dbReference type="InterPro" id="IPR011108">
    <property type="entry name" value="RMMBL"/>
</dbReference>
<dbReference type="PANTHER" id="PTHR45922">
    <property type="entry name" value="CLEAVAGE AND POLYADENYLATION SPECIFICITY FACTOR SUBUNIT 2"/>
    <property type="match status" value="1"/>
</dbReference>
<dbReference type="PANTHER" id="PTHR45922:SF1">
    <property type="entry name" value="CLEAVAGE AND POLYADENYLATION SPECIFICITY FACTOR SUBUNIT 2"/>
    <property type="match status" value="1"/>
</dbReference>
<dbReference type="Pfam" id="PF10996">
    <property type="entry name" value="Beta-Casp"/>
    <property type="match status" value="1"/>
</dbReference>
<dbReference type="Pfam" id="PF13299">
    <property type="entry name" value="CPSF100_C"/>
    <property type="match status" value="1"/>
</dbReference>
<dbReference type="Pfam" id="PF16661">
    <property type="entry name" value="Lactamase_B_6"/>
    <property type="match status" value="1"/>
</dbReference>
<dbReference type="Pfam" id="PF07521">
    <property type="entry name" value="RMMBL"/>
    <property type="match status" value="1"/>
</dbReference>
<dbReference type="SMART" id="SM01027">
    <property type="entry name" value="Beta-Casp"/>
    <property type="match status" value="1"/>
</dbReference>
<dbReference type="SUPFAM" id="SSF56281">
    <property type="entry name" value="Metallo-hydrolase/oxidoreductase"/>
    <property type="match status" value="1"/>
</dbReference>
<protein>
    <recommendedName>
        <fullName>Cleavage and polyadenylation specificity factor subunit 2</fullName>
    </recommendedName>
    <alternativeName>
        <fullName>Cleavage and polyadenylation specificity factor 100 kDa subunit</fullName>
        <shortName>CPSF 100 kDa subunit</shortName>
    </alternativeName>
</protein>
<gene>
    <name type="primary">cpsf2</name>
</gene>
<accession>Q9W799</accession>
<organism>
    <name type="scientific">Xenopus laevis</name>
    <name type="common">African clawed frog</name>
    <dbReference type="NCBI Taxonomy" id="8355"/>
    <lineage>
        <taxon>Eukaryota</taxon>
        <taxon>Metazoa</taxon>
        <taxon>Chordata</taxon>
        <taxon>Craniata</taxon>
        <taxon>Vertebrata</taxon>
        <taxon>Euteleostomi</taxon>
        <taxon>Amphibia</taxon>
        <taxon>Batrachia</taxon>
        <taxon>Anura</taxon>
        <taxon>Pipoidea</taxon>
        <taxon>Pipidae</taxon>
        <taxon>Xenopodinae</taxon>
        <taxon>Xenopus</taxon>
        <taxon>Xenopus</taxon>
    </lineage>
</organism>
<keyword id="KW-0963">Cytoplasm</keyword>
<keyword id="KW-0507">mRNA processing</keyword>
<keyword id="KW-0539">Nucleus</keyword>
<keyword id="KW-1185">Reference proteome</keyword>
<keyword id="KW-0694">RNA-binding</keyword>
<reference key="1">
    <citation type="journal article" date="1999" name="Mol. Cell. Biol.">
        <title>The cleavage and polyadenylation specificity factor in Xenopus laevis oocytes is a cytoplasmic factor involved in regulated polyadenylation.</title>
        <authorList>
            <person name="Dickson K.S."/>
            <person name="Bilger A."/>
            <person name="Ballantyne S."/>
            <person name="Wickens M.P."/>
        </authorList>
    </citation>
    <scope>NUCLEOTIDE SEQUENCE [MRNA]</scope>
</reference>
<reference key="2">
    <citation type="journal article" date="2002" name="Mol. Biol. Cell">
        <title>Symplekin, a constitutive protein of karyo- and cytoplasmic particles involved in mRNA biogenesis in Xenopus laevis oocytes.</title>
        <authorList>
            <person name="Hofmann I."/>
            <person name="Schnoelzer M."/>
            <person name="Kaufmann I."/>
            <person name="Franke W.W."/>
        </authorList>
    </citation>
    <scope>IDENTIFICATION IN A COMPLEX WITH CPSF2</scope>
    <scope>CPSF73</scope>
    <scope>CPSF160 AND SYMPK</scope>
    <scope>SUBCELLULAR LOCATION</scope>
</reference>
<reference key="3">
    <citation type="journal article" date="2004" name="Cell">
        <title>Symplekin and xGLD-2 are required for CPEB-mediated cytoplasmic polyadenylation.</title>
        <authorList>
            <person name="Barnard D.C."/>
            <person name="Ryan K."/>
            <person name="Manley J.L."/>
            <person name="Richter J.D."/>
        </authorList>
    </citation>
    <scope>INTERACTION WITH SYMPK</scope>
</reference>